<dbReference type="EMBL" id="CP001598">
    <property type="protein sequence ID" value="ACQ48031.1"/>
    <property type="molecule type" value="Genomic_DNA"/>
</dbReference>
<dbReference type="RefSeq" id="WP_000708743.1">
    <property type="nucleotide sequence ID" value="NC_012659.1"/>
</dbReference>
<dbReference type="GeneID" id="45022869"/>
<dbReference type="KEGG" id="bai:BAA_3113"/>
<dbReference type="HOGENOM" id="CLU_106619_0_0_9"/>
<dbReference type="HAMAP" id="MF_00489">
    <property type="entry name" value="UPF0178"/>
    <property type="match status" value="1"/>
</dbReference>
<dbReference type="InterPro" id="IPR003791">
    <property type="entry name" value="UPF0178"/>
</dbReference>
<dbReference type="NCBIfam" id="NF001095">
    <property type="entry name" value="PRK00124.1"/>
    <property type="match status" value="1"/>
</dbReference>
<dbReference type="PANTHER" id="PTHR35146">
    <property type="entry name" value="UPF0178 PROTEIN YAII"/>
    <property type="match status" value="1"/>
</dbReference>
<dbReference type="PANTHER" id="PTHR35146:SF1">
    <property type="entry name" value="UPF0178 PROTEIN YAII"/>
    <property type="match status" value="1"/>
</dbReference>
<dbReference type="Pfam" id="PF02639">
    <property type="entry name" value="DUF188"/>
    <property type="match status" value="1"/>
</dbReference>
<name>Y3113_BACAA</name>
<comment type="similarity">
    <text evidence="1">Belongs to the UPF0178 family.</text>
</comment>
<sequence length="146" mass="16336">MKIYVDADACPVKDVIIFEATKAEIPVILVTSFSHYSNAEQPKGVETIYVDSGADAADYRIMQLAQKEDLIVTQDYGLASLALAKGCIVLHHKGYKYTNENIEQLLQTRYLSAMVRKSGKRTKGPKPFTAEDKEKFRALFKSMIAL</sequence>
<evidence type="ECO:0000255" key="1">
    <source>
        <dbReference type="HAMAP-Rule" id="MF_00489"/>
    </source>
</evidence>
<gene>
    <name type="ordered locus">BAA_3113</name>
</gene>
<proteinExistence type="inferred from homology"/>
<organism>
    <name type="scientific">Bacillus anthracis (strain A0248)</name>
    <dbReference type="NCBI Taxonomy" id="592021"/>
    <lineage>
        <taxon>Bacteria</taxon>
        <taxon>Bacillati</taxon>
        <taxon>Bacillota</taxon>
        <taxon>Bacilli</taxon>
        <taxon>Bacillales</taxon>
        <taxon>Bacillaceae</taxon>
        <taxon>Bacillus</taxon>
        <taxon>Bacillus cereus group</taxon>
    </lineage>
</organism>
<accession>C3P002</accession>
<protein>
    <recommendedName>
        <fullName evidence="1">UPF0178 protein BAA_3113</fullName>
    </recommendedName>
</protein>
<feature type="chain" id="PRO_1000197822" description="UPF0178 protein BAA_3113">
    <location>
        <begin position="1"/>
        <end position="146"/>
    </location>
</feature>
<reference key="1">
    <citation type="submission" date="2009-04" db="EMBL/GenBank/DDBJ databases">
        <title>Genome sequence of Bacillus anthracis A0248.</title>
        <authorList>
            <person name="Dodson R.J."/>
            <person name="Munk A.C."/>
            <person name="Bruce D."/>
            <person name="Detter C."/>
            <person name="Tapia R."/>
            <person name="Sutton G."/>
            <person name="Sims D."/>
            <person name="Brettin T."/>
        </authorList>
    </citation>
    <scope>NUCLEOTIDE SEQUENCE [LARGE SCALE GENOMIC DNA]</scope>
    <source>
        <strain>A0248</strain>
    </source>
</reference>